<gene>
    <name evidence="2" type="primary">rpmA</name>
    <name type="ordered locus">SP70585_1178</name>
</gene>
<evidence type="ECO:0000250" key="1">
    <source>
        <dbReference type="UniProtKB" id="Q2FXT0"/>
    </source>
</evidence>
<evidence type="ECO:0000255" key="2">
    <source>
        <dbReference type="HAMAP-Rule" id="MF_00539"/>
    </source>
</evidence>
<evidence type="ECO:0000256" key="3">
    <source>
        <dbReference type="SAM" id="MobiDB-lite"/>
    </source>
</evidence>
<evidence type="ECO:0000305" key="4"/>
<proteinExistence type="inferred from homology"/>
<comment type="PTM">
    <text evidence="1">The N-terminus is cleaved by ribosomal processing cysteine protease Prp.</text>
</comment>
<comment type="similarity">
    <text evidence="2">Belongs to the bacterial ribosomal protein bL27 family.</text>
</comment>
<feature type="propeptide" id="PRO_0000459952" evidence="1">
    <location>
        <begin position="1"/>
        <end position="12"/>
    </location>
</feature>
<feature type="chain" id="PRO_1000195888" description="Large ribosomal subunit protein bL27">
    <location>
        <begin position="13"/>
        <end position="97"/>
    </location>
</feature>
<feature type="region of interest" description="Disordered" evidence="3">
    <location>
        <begin position="13"/>
        <end position="37"/>
    </location>
</feature>
<reference key="1">
    <citation type="journal article" date="2010" name="Genome Biol.">
        <title>Structure and dynamics of the pan-genome of Streptococcus pneumoniae and closely related species.</title>
        <authorList>
            <person name="Donati C."/>
            <person name="Hiller N.L."/>
            <person name="Tettelin H."/>
            <person name="Muzzi A."/>
            <person name="Croucher N.J."/>
            <person name="Angiuoli S.V."/>
            <person name="Oggioni M."/>
            <person name="Dunning Hotopp J.C."/>
            <person name="Hu F.Z."/>
            <person name="Riley D.R."/>
            <person name="Covacci A."/>
            <person name="Mitchell T.J."/>
            <person name="Bentley S.D."/>
            <person name="Kilian M."/>
            <person name="Ehrlich G.D."/>
            <person name="Rappuoli R."/>
            <person name="Moxon E.R."/>
            <person name="Masignani V."/>
        </authorList>
    </citation>
    <scope>NUCLEOTIDE SEQUENCE [LARGE SCALE GENOMIC DNA]</scope>
    <source>
        <strain>70585</strain>
    </source>
</reference>
<sequence length="97" mass="10462">MLKMTLNNLQLFAHKKGGGSTSNGRDSQAKRLGAKAADGQTVTGGSILYRQRGTHIYPGVNVGRGGDDTLFAKVEGVVRFERKGRDKKQVSVYPIAK</sequence>
<keyword id="KW-0687">Ribonucleoprotein</keyword>
<keyword id="KW-0689">Ribosomal protein</keyword>
<name>RL27_STRP7</name>
<organism>
    <name type="scientific">Streptococcus pneumoniae (strain 70585)</name>
    <dbReference type="NCBI Taxonomy" id="488221"/>
    <lineage>
        <taxon>Bacteria</taxon>
        <taxon>Bacillati</taxon>
        <taxon>Bacillota</taxon>
        <taxon>Bacilli</taxon>
        <taxon>Lactobacillales</taxon>
        <taxon>Streptococcaceae</taxon>
        <taxon>Streptococcus</taxon>
    </lineage>
</organism>
<accession>C1C7A1</accession>
<protein>
    <recommendedName>
        <fullName evidence="2">Large ribosomal subunit protein bL27</fullName>
    </recommendedName>
    <alternativeName>
        <fullName evidence="4">50S ribosomal protein L27</fullName>
    </alternativeName>
</protein>
<dbReference type="EMBL" id="CP000918">
    <property type="protein sequence ID" value="ACO17345.1"/>
    <property type="molecule type" value="Genomic_DNA"/>
</dbReference>
<dbReference type="RefSeq" id="WP_000916509.1">
    <property type="nucleotide sequence ID" value="NC_012468.1"/>
</dbReference>
<dbReference type="SMR" id="C1C7A1"/>
<dbReference type="GeneID" id="93739803"/>
<dbReference type="KEGG" id="snm:SP70585_1178"/>
<dbReference type="HOGENOM" id="CLU_095424_4_0_9"/>
<dbReference type="Proteomes" id="UP000002211">
    <property type="component" value="Chromosome"/>
</dbReference>
<dbReference type="GO" id="GO:0022625">
    <property type="term" value="C:cytosolic large ribosomal subunit"/>
    <property type="evidence" value="ECO:0007669"/>
    <property type="project" value="TreeGrafter"/>
</dbReference>
<dbReference type="GO" id="GO:0003735">
    <property type="term" value="F:structural constituent of ribosome"/>
    <property type="evidence" value="ECO:0007669"/>
    <property type="project" value="InterPro"/>
</dbReference>
<dbReference type="GO" id="GO:0006412">
    <property type="term" value="P:translation"/>
    <property type="evidence" value="ECO:0007669"/>
    <property type="project" value="UniProtKB-UniRule"/>
</dbReference>
<dbReference type="FunFam" id="2.40.50.100:FF:000004">
    <property type="entry name" value="50S ribosomal protein L27"/>
    <property type="match status" value="1"/>
</dbReference>
<dbReference type="Gene3D" id="2.40.50.100">
    <property type="match status" value="1"/>
</dbReference>
<dbReference type="HAMAP" id="MF_00539">
    <property type="entry name" value="Ribosomal_bL27"/>
    <property type="match status" value="1"/>
</dbReference>
<dbReference type="InterPro" id="IPR001684">
    <property type="entry name" value="Ribosomal_bL27"/>
</dbReference>
<dbReference type="InterPro" id="IPR018261">
    <property type="entry name" value="Ribosomal_bL27_CS"/>
</dbReference>
<dbReference type="NCBIfam" id="TIGR00062">
    <property type="entry name" value="L27"/>
    <property type="match status" value="1"/>
</dbReference>
<dbReference type="PANTHER" id="PTHR15893:SF0">
    <property type="entry name" value="LARGE RIBOSOMAL SUBUNIT PROTEIN BL27M"/>
    <property type="match status" value="1"/>
</dbReference>
<dbReference type="PANTHER" id="PTHR15893">
    <property type="entry name" value="RIBOSOMAL PROTEIN L27"/>
    <property type="match status" value="1"/>
</dbReference>
<dbReference type="Pfam" id="PF01016">
    <property type="entry name" value="Ribosomal_L27"/>
    <property type="match status" value="1"/>
</dbReference>
<dbReference type="PRINTS" id="PR00063">
    <property type="entry name" value="RIBOSOMALL27"/>
</dbReference>
<dbReference type="SUPFAM" id="SSF110324">
    <property type="entry name" value="Ribosomal L27 protein-like"/>
    <property type="match status" value="1"/>
</dbReference>
<dbReference type="PROSITE" id="PS00831">
    <property type="entry name" value="RIBOSOMAL_L27"/>
    <property type="match status" value="1"/>
</dbReference>